<accession>A5UE59</accession>
<reference key="1">
    <citation type="journal article" date="2007" name="Genome Biol.">
        <title>Characterization and modeling of the Haemophilus influenzae core and supragenomes based on the complete genomic sequences of Rd and 12 clinical nontypeable strains.</title>
        <authorList>
            <person name="Hogg J.S."/>
            <person name="Hu F.Z."/>
            <person name="Janto B."/>
            <person name="Boissy R."/>
            <person name="Hayes J."/>
            <person name="Keefe R."/>
            <person name="Post J.C."/>
            <person name="Ehrlich G.D."/>
        </authorList>
    </citation>
    <scope>NUCLEOTIDE SEQUENCE [LARGE SCALE GENOMIC DNA]</scope>
    <source>
        <strain>PittEE</strain>
    </source>
</reference>
<gene>
    <name evidence="1" type="primary">ispD</name>
    <name type="ordered locus">CGSHiEE_08815</name>
</gene>
<proteinExistence type="inferred from homology"/>
<comment type="function">
    <text evidence="1">Catalyzes the formation of 4-diphosphocytidyl-2-C-methyl-D-erythritol from CTP and 2-C-methyl-D-erythritol 4-phosphate (MEP).</text>
</comment>
<comment type="catalytic activity">
    <reaction evidence="1">
        <text>2-C-methyl-D-erythritol 4-phosphate + CTP + H(+) = 4-CDP-2-C-methyl-D-erythritol + diphosphate</text>
        <dbReference type="Rhea" id="RHEA:13429"/>
        <dbReference type="ChEBI" id="CHEBI:15378"/>
        <dbReference type="ChEBI" id="CHEBI:33019"/>
        <dbReference type="ChEBI" id="CHEBI:37563"/>
        <dbReference type="ChEBI" id="CHEBI:57823"/>
        <dbReference type="ChEBI" id="CHEBI:58262"/>
        <dbReference type="EC" id="2.7.7.60"/>
    </reaction>
</comment>
<comment type="pathway">
    <text evidence="1">Isoprenoid biosynthesis; isopentenyl diphosphate biosynthesis via DXP pathway; isopentenyl diphosphate from 1-deoxy-D-xylulose 5-phosphate: step 2/6.</text>
</comment>
<comment type="similarity">
    <text evidence="1">Belongs to the IspD/TarI cytidylyltransferase family. IspD subfamily.</text>
</comment>
<organism>
    <name type="scientific">Haemophilus influenzae (strain PittEE)</name>
    <dbReference type="NCBI Taxonomy" id="374930"/>
    <lineage>
        <taxon>Bacteria</taxon>
        <taxon>Pseudomonadati</taxon>
        <taxon>Pseudomonadota</taxon>
        <taxon>Gammaproteobacteria</taxon>
        <taxon>Pasteurellales</taxon>
        <taxon>Pasteurellaceae</taxon>
        <taxon>Haemophilus</taxon>
    </lineage>
</organism>
<keyword id="KW-0414">Isoprene biosynthesis</keyword>
<keyword id="KW-0548">Nucleotidyltransferase</keyword>
<keyword id="KW-0808">Transferase</keyword>
<evidence type="ECO:0000255" key="1">
    <source>
        <dbReference type="HAMAP-Rule" id="MF_00108"/>
    </source>
</evidence>
<sequence>MARSIIAVLPAAGVGSRMQADKPKQYLTLLGKTLLEHTLDVMLSYPAVSKIILAVSKDDPYISTLSLDPKIQLVEGGTTRAESVLNGLNVIAEKNAWVLVHDAARPCLQHADIDKLLAIEDKQGAILAIPVTDTIKRADNQQCIVKTEDRSQLWQAMTPQFFPVDILRDALSTGIQQGANITDEASAIELAGFRPHLVAGRSDNLKVTRPEDLALAEFYLTRNKL</sequence>
<protein>
    <recommendedName>
        <fullName evidence="1">2-C-methyl-D-erythritol 4-phosphate cytidylyltransferase</fullName>
        <ecNumber evidence="1">2.7.7.60</ecNumber>
    </recommendedName>
    <alternativeName>
        <fullName evidence="1">4-diphosphocytidyl-2C-methyl-D-erythritol synthase</fullName>
    </alternativeName>
    <alternativeName>
        <fullName evidence="1">MEP cytidylyltransferase</fullName>
        <shortName evidence="1">MCT</shortName>
    </alternativeName>
</protein>
<dbReference type="EC" id="2.7.7.60" evidence="1"/>
<dbReference type="EMBL" id="CP000671">
    <property type="protein sequence ID" value="ABQ99060.1"/>
    <property type="molecule type" value="Genomic_DNA"/>
</dbReference>
<dbReference type="SMR" id="A5UE59"/>
<dbReference type="KEGG" id="hip:CGSHiEE_08815"/>
<dbReference type="HOGENOM" id="CLU_061281_3_1_6"/>
<dbReference type="UniPathway" id="UPA00056">
    <property type="reaction ID" value="UER00093"/>
</dbReference>
<dbReference type="GO" id="GO:0050518">
    <property type="term" value="F:2-C-methyl-D-erythritol 4-phosphate cytidylyltransferase activity"/>
    <property type="evidence" value="ECO:0007669"/>
    <property type="project" value="UniProtKB-UniRule"/>
</dbReference>
<dbReference type="GO" id="GO:0019288">
    <property type="term" value="P:isopentenyl diphosphate biosynthetic process, methylerythritol 4-phosphate pathway"/>
    <property type="evidence" value="ECO:0007669"/>
    <property type="project" value="UniProtKB-UniRule"/>
</dbReference>
<dbReference type="CDD" id="cd02516">
    <property type="entry name" value="CDP-ME_synthetase"/>
    <property type="match status" value="1"/>
</dbReference>
<dbReference type="FunFam" id="3.90.550.10:FF:000003">
    <property type="entry name" value="2-C-methyl-D-erythritol 4-phosphate cytidylyltransferase"/>
    <property type="match status" value="1"/>
</dbReference>
<dbReference type="Gene3D" id="3.90.550.10">
    <property type="entry name" value="Spore Coat Polysaccharide Biosynthesis Protein SpsA, Chain A"/>
    <property type="match status" value="1"/>
</dbReference>
<dbReference type="HAMAP" id="MF_00108">
    <property type="entry name" value="IspD"/>
    <property type="match status" value="1"/>
</dbReference>
<dbReference type="InterPro" id="IPR001228">
    <property type="entry name" value="IspD"/>
</dbReference>
<dbReference type="InterPro" id="IPR034683">
    <property type="entry name" value="IspD/TarI"/>
</dbReference>
<dbReference type="InterPro" id="IPR050088">
    <property type="entry name" value="IspD/TarI_cytidylyltransf_bact"/>
</dbReference>
<dbReference type="InterPro" id="IPR018294">
    <property type="entry name" value="ISPD_synthase_CS"/>
</dbReference>
<dbReference type="InterPro" id="IPR029044">
    <property type="entry name" value="Nucleotide-diphossugar_trans"/>
</dbReference>
<dbReference type="NCBIfam" id="TIGR00453">
    <property type="entry name" value="ispD"/>
    <property type="match status" value="1"/>
</dbReference>
<dbReference type="PANTHER" id="PTHR32125">
    <property type="entry name" value="2-C-METHYL-D-ERYTHRITOL 4-PHOSPHATE CYTIDYLYLTRANSFERASE, CHLOROPLASTIC"/>
    <property type="match status" value="1"/>
</dbReference>
<dbReference type="PANTHER" id="PTHR32125:SF4">
    <property type="entry name" value="2-C-METHYL-D-ERYTHRITOL 4-PHOSPHATE CYTIDYLYLTRANSFERASE, CHLOROPLASTIC"/>
    <property type="match status" value="1"/>
</dbReference>
<dbReference type="Pfam" id="PF01128">
    <property type="entry name" value="IspD"/>
    <property type="match status" value="1"/>
</dbReference>
<dbReference type="SUPFAM" id="SSF53448">
    <property type="entry name" value="Nucleotide-diphospho-sugar transferases"/>
    <property type="match status" value="1"/>
</dbReference>
<dbReference type="PROSITE" id="PS01295">
    <property type="entry name" value="ISPD"/>
    <property type="match status" value="1"/>
</dbReference>
<name>ISPD_HAEIE</name>
<feature type="chain" id="PRO_1000022927" description="2-C-methyl-D-erythritol 4-phosphate cytidylyltransferase">
    <location>
        <begin position="1"/>
        <end position="225"/>
    </location>
</feature>
<feature type="site" description="Transition state stabilizer" evidence="1">
    <location>
        <position position="17"/>
    </location>
</feature>
<feature type="site" description="Transition state stabilizer" evidence="1">
    <location>
        <position position="24"/>
    </location>
</feature>
<feature type="site" description="Positions MEP for the nucleophilic attack" evidence="1">
    <location>
        <position position="150"/>
    </location>
</feature>
<feature type="site" description="Positions MEP for the nucleophilic attack" evidence="1">
    <location>
        <position position="206"/>
    </location>
</feature>